<name>GATC_BACC4</name>
<comment type="function">
    <text evidence="1">Allows the formation of correctly charged Asn-tRNA(Asn) or Gln-tRNA(Gln) through the transamidation of misacylated Asp-tRNA(Asn) or Glu-tRNA(Gln) in organisms which lack either or both of asparaginyl-tRNA or glutaminyl-tRNA synthetases. The reaction takes place in the presence of glutamine and ATP through an activated phospho-Asp-tRNA(Asn) or phospho-Glu-tRNA(Gln).</text>
</comment>
<comment type="catalytic activity">
    <reaction evidence="1">
        <text>L-glutamyl-tRNA(Gln) + L-glutamine + ATP + H2O = L-glutaminyl-tRNA(Gln) + L-glutamate + ADP + phosphate + H(+)</text>
        <dbReference type="Rhea" id="RHEA:17521"/>
        <dbReference type="Rhea" id="RHEA-COMP:9681"/>
        <dbReference type="Rhea" id="RHEA-COMP:9684"/>
        <dbReference type="ChEBI" id="CHEBI:15377"/>
        <dbReference type="ChEBI" id="CHEBI:15378"/>
        <dbReference type="ChEBI" id="CHEBI:29985"/>
        <dbReference type="ChEBI" id="CHEBI:30616"/>
        <dbReference type="ChEBI" id="CHEBI:43474"/>
        <dbReference type="ChEBI" id="CHEBI:58359"/>
        <dbReference type="ChEBI" id="CHEBI:78520"/>
        <dbReference type="ChEBI" id="CHEBI:78521"/>
        <dbReference type="ChEBI" id="CHEBI:456216"/>
    </reaction>
</comment>
<comment type="catalytic activity">
    <reaction evidence="1">
        <text>L-aspartyl-tRNA(Asn) + L-glutamine + ATP + H2O = L-asparaginyl-tRNA(Asn) + L-glutamate + ADP + phosphate + 2 H(+)</text>
        <dbReference type="Rhea" id="RHEA:14513"/>
        <dbReference type="Rhea" id="RHEA-COMP:9674"/>
        <dbReference type="Rhea" id="RHEA-COMP:9677"/>
        <dbReference type="ChEBI" id="CHEBI:15377"/>
        <dbReference type="ChEBI" id="CHEBI:15378"/>
        <dbReference type="ChEBI" id="CHEBI:29985"/>
        <dbReference type="ChEBI" id="CHEBI:30616"/>
        <dbReference type="ChEBI" id="CHEBI:43474"/>
        <dbReference type="ChEBI" id="CHEBI:58359"/>
        <dbReference type="ChEBI" id="CHEBI:78515"/>
        <dbReference type="ChEBI" id="CHEBI:78516"/>
        <dbReference type="ChEBI" id="CHEBI:456216"/>
    </reaction>
</comment>
<comment type="subunit">
    <text evidence="1">Heterotrimer of A, B and C subunits.</text>
</comment>
<comment type="similarity">
    <text evidence="1">Belongs to the GatC family.</text>
</comment>
<evidence type="ECO:0000255" key="1">
    <source>
        <dbReference type="HAMAP-Rule" id="MF_00122"/>
    </source>
</evidence>
<feature type="chain" id="PRO_1000117628" description="Aspartyl/glutamyl-tRNA(Asn/Gln) amidotransferase subunit C">
    <location>
        <begin position="1"/>
        <end position="96"/>
    </location>
</feature>
<organism>
    <name type="scientific">Bacillus cereus (strain B4264)</name>
    <dbReference type="NCBI Taxonomy" id="405532"/>
    <lineage>
        <taxon>Bacteria</taxon>
        <taxon>Bacillati</taxon>
        <taxon>Bacillota</taxon>
        <taxon>Bacilli</taxon>
        <taxon>Bacillales</taxon>
        <taxon>Bacillaceae</taxon>
        <taxon>Bacillus</taxon>
        <taxon>Bacillus cereus group</taxon>
    </lineage>
</organism>
<dbReference type="EC" id="6.3.5.-" evidence="1"/>
<dbReference type="EMBL" id="CP001176">
    <property type="protein sequence ID" value="ACK62864.1"/>
    <property type="molecule type" value="Genomic_DNA"/>
</dbReference>
<dbReference type="RefSeq" id="WP_000086999.1">
    <property type="nucleotide sequence ID" value="NZ_VEHB01000009.1"/>
</dbReference>
<dbReference type="SMR" id="B7H4W1"/>
<dbReference type="GeneID" id="93010705"/>
<dbReference type="KEGG" id="bcb:BCB4264_A0366"/>
<dbReference type="HOGENOM" id="CLU_105899_6_1_9"/>
<dbReference type="Proteomes" id="UP000007096">
    <property type="component" value="Chromosome"/>
</dbReference>
<dbReference type="GO" id="GO:0050566">
    <property type="term" value="F:asparaginyl-tRNA synthase (glutamine-hydrolyzing) activity"/>
    <property type="evidence" value="ECO:0007669"/>
    <property type="project" value="RHEA"/>
</dbReference>
<dbReference type="GO" id="GO:0005524">
    <property type="term" value="F:ATP binding"/>
    <property type="evidence" value="ECO:0007669"/>
    <property type="project" value="UniProtKB-KW"/>
</dbReference>
<dbReference type="GO" id="GO:0050567">
    <property type="term" value="F:glutaminyl-tRNA synthase (glutamine-hydrolyzing) activity"/>
    <property type="evidence" value="ECO:0007669"/>
    <property type="project" value="UniProtKB-UniRule"/>
</dbReference>
<dbReference type="GO" id="GO:0070681">
    <property type="term" value="P:glutaminyl-tRNAGln biosynthesis via transamidation"/>
    <property type="evidence" value="ECO:0007669"/>
    <property type="project" value="TreeGrafter"/>
</dbReference>
<dbReference type="GO" id="GO:0006450">
    <property type="term" value="P:regulation of translational fidelity"/>
    <property type="evidence" value="ECO:0007669"/>
    <property type="project" value="InterPro"/>
</dbReference>
<dbReference type="GO" id="GO:0006412">
    <property type="term" value="P:translation"/>
    <property type="evidence" value="ECO:0007669"/>
    <property type="project" value="UniProtKB-UniRule"/>
</dbReference>
<dbReference type="Gene3D" id="1.10.20.60">
    <property type="entry name" value="Glu-tRNAGln amidotransferase C subunit, N-terminal domain"/>
    <property type="match status" value="1"/>
</dbReference>
<dbReference type="HAMAP" id="MF_00122">
    <property type="entry name" value="GatC"/>
    <property type="match status" value="1"/>
</dbReference>
<dbReference type="InterPro" id="IPR036113">
    <property type="entry name" value="Asp/Glu-ADT_sf_sub_c"/>
</dbReference>
<dbReference type="InterPro" id="IPR003837">
    <property type="entry name" value="GatC"/>
</dbReference>
<dbReference type="NCBIfam" id="TIGR00135">
    <property type="entry name" value="gatC"/>
    <property type="match status" value="1"/>
</dbReference>
<dbReference type="PANTHER" id="PTHR15004">
    <property type="entry name" value="GLUTAMYL-TRNA(GLN) AMIDOTRANSFERASE SUBUNIT C, MITOCHONDRIAL"/>
    <property type="match status" value="1"/>
</dbReference>
<dbReference type="PANTHER" id="PTHR15004:SF0">
    <property type="entry name" value="GLUTAMYL-TRNA(GLN) AMIDOTRANSFERASE SUBUNIT C, MITOCHONDRIAL"/>
    <property type="match status" value="1"/>
</dbReference>
<dbReference type="Pfam" id="PF02686">
    <property type="entry name" value="GatC"/>
    <property type="match status" value="1"/>
</dbReference>
<dbReference type="SUPFAM" id="SSF141000">
    <property type="entry name" value="Glu-tRNAGln amidotransferase C subunit"/>
    <property type="match status" value="1"/>
</dbReference>
<reference key="1">
    <citation type="submission" date="2008-10" db="EMBL/GenBank/DDBJ databases">
        <title>Genome sequence of Bacillus cereus B4264.</title>
        <authorList>
            <person name="Dodson R.J."/>
            <person name="Durkin A.S."/>
            <person name="Rosovitz M.J."/>
            <person name="Rasko D.A."/>
            <person name="Hoffmaster A."/>
            <person name="Ravel J."/>
            <person name="Sutton G."/>
        </authorList>
    </citation>
    <scope>NUCLEOTIDE SEQUENCE [LARGE SCALE GENOMIC DNA]</scope>
    <source>
        <strain>B4264</strain>
    </source>
</reference>
<keyword id="KW-0067">ATP-binding</keyword>
<keyword id="KW-0436">Ligase</keyword>
<keyword id="KW-0547">Nucleotide-binding</keyword>
<keyword id="KW-0648">Protein biosynthesis</keyword>
<protein>
    <recommendedName>
        <fullName evidence="1">Aspartyl/glutamyl-tRNA(Asn/Gln) amidotransferase subunit C</fullName>
        <shortName evidence="1">Asp/Glu-ADT subunit C</shortName>
        <ecNumber evidence="1">6.3.5.-</ecNumber>
    </recommendedName>
</protein>
<accession>B7H4W1</accession>
<proteinExistence type="inferred from homology"/>
<gene>
    <name evidence="1" type="primary">gatC</name>
    <name type="ordered locus">BCB4264_A0366</name>
</gene>
<sequence>MSRISVENVKHVAHLARLAITDQEAEKFQKQLDAIVTFAEQLNELDTTDVKPTTHVLTMKNVMREDVPEKGLPVEEVLKNAPDHKDNQIRVPAVLE</sequence>